<name>PGK_STRE4</name>
<organism>
    <name type="scientific">Streptococcus equi subsp. equi (strain 4047)</name>
    <dbReference type="NCBI Taxonomy" id="553482"/>
    <lineage>
        <taxon>Bacteria</taxon>
        <taxon>Bacillati</taxon>
        <taxon>Bacillota</taxon>
        <taxon>Bacilli</taxon>
        <taxon>Lactobacillales</taxon>
        <taxon>Streptococcaceae</taxon>
        <taxon>Streptococcus</taxon>
    </lineage>
</organism>
<proteinExistence type="inferred from homology"/>
<protein>
    <recommendedName>
        <fullName evidence="1">Phosphoglycerate kinase</fullName>
        <ecNumber evidence="1">2.7.2.3</ecNumber>
    </recommendedName>
</protein>
<evidence type="ECO:0000255" key="1">
    <source>
        <dbReference type="HAMAP-Rule" id="MF_00145"/>
    </source>
</evidence>
<gene>
    <name evidence="1" type="primary">pgk</name>
    <name type="ordered locus">SEQ_0347</name>
</gene>
<comment type="catalytic activity">
    <reaction evidence="1">
        <text>(2R)-3-phosphoglycerate + ATP = (2R)-3-phospho-glyceroyl phosphate + ADP</text>
        <dbReference type="Rhea" id="RHEA:14801"/>
        <dbReference type="ChEBI" id="CHEBI:30616"/>
        <dbReference type="ChEBI" id="CHEBI:57604"/>
        <dbReference type="ChEBI" id="CHEBI:58272"/>
        <dbReference type="ChEBI" id="CHEBI:456216"/>
        <dbReference type="EC" id="2.7.2.3"/>
    </reaction>
</comment>
<comment type="pathway">
    <text evidence="1">Carbohydrate degradation; glycolysis; pyruvate from D-glyceraldehyde 3-phosphate: step 2/5.</text>
</comment>
<comment type="subunit">
    <text evidence="1">Monomer.</text>
</comment>
<comment type="subcellular location">
    <subcellularLocation>
        <location evidence="1">Cytoplasm</location>
    </subcellularLocation>
</comment>
<comment type="similarity">
    <text evidence="1">Belongs to the phosphoglycerate kinase family.</text>
</comment>
<keyword id="KW-0067">ATP-binding</keyword>
<keyword id="KW-0963">Cytoplasm</keyword>
<keyword id="KW-0324">Glycolysis</keyword>
<keyword id="KW-0418">Kinase</keyword>
<keyword id="KW-0547">Nucleotide-binding</keyword>
<keyword id="KW-0808">Transferase</keyword>
<dbReference type="EC" id="2.7.2.3" evidence="1"/>
<dbReference type="EMBL" id="FM204883">
    <property type="protein sequence ID" value="CAW92467.1"/>
    <property type="molecule type" value="Genomic_DNA"/>
</dbReference>
<dbReference type="RefSeq" id="WP_012678992.1">
    <property type="nucleotide sequence ID" value="NC_012471.1"/>
</dbReference>
<dbReference type="SMR" id="C0M940"/>
<dbReference type="KEGG" id="seu:SEQ_0347"/>
<dbReference type="HOGENOM" id="CLU_025427_0_1_9"/>
<dbReference type="OrthoDB" id="9808460at2"/>
<dbReference type="UniPathway" id="UPA00109">
    <property type="reaction ID" value="UER00185"/>
</dbReference>
<dbReference type="Proteomes" id="UP000001365">
    <property type="component" value="Chromosome"/>
</dbReference>
<dbReference type="GO" id="GO:0005829">
    <property type="term" value="C:cytosol"/>
    <property type="evidence" value="ECO:0007669"/>
    <property type="project" value="TreeGrafter"/>
</dbReference>
<dbReference type="GO" id="GO:0043531">
    <property type="term" value="F:ADP binding"/>
    <property type="evidence" value="ECO:0007669"/>
    <property type="project" value="TreeGrafter"/>
</dbReference>
<dbReference type="GO" id="GO:0005524">
    <property type="term" value="F:ATP binding"/>
    <property type="evidence" value="ECO:0007669"/>
    <property type="project" value="UniProtKB-KW"/>
</dbReference>
<dbReference type="GO" id="GO:0004618">
    <property type="term" value="F:phosphoglycerate kinase activity"/>
    <property type="evidence" value="ECO:0007669"/>
    <property type="project" value="UniProtKB-UniRule"/>
</dbReference>
<dbReference type="GO" id="GO:0006094">
    <property type="term" value="P:gluconeogenesis"/>
    <property type="evidence" value="ECO:0007669"/>
    <property type="project" value="TreeGrafter"/>
</dbReference>
<dbReference type="GO" id="GO:0006096">
    <property type="term" value="P:glycolytic process"/>
    <property type="evidence" value="ECO:0007669"/>
    <property type="project" value="UniProtKB-UniRule"/>
</dbReference>
<dbReference type="FunFam" id="3.40.50.1260:FF:000001">
    <property type="entry name" value="Phosphoglycerate kinase"/>
    <property type="match status" value="1"/>
</dbReference>
<dbReference type="FunFam" id="3.40.50.1260:FF:000008">
    <property type="entry name" value="Phosphoglycerate kinase"/>
    <property type="match status" value="1"/>
</dbReference>
<dbReference type="Gene3D" id="3.40.50.1260">
    <property type="entry name" value="Phosphoglycerate kinase, N-terminal domain"/>
    <property type="match status" value="2"/>
</dbReference>
<dbReference type="HAMAP" id="MF_00145">
    <property type="entry name" value="Phosphoglyc_kinase"/>
    <property type="match status" value="1"/>
</dbReference>
<dbReference type="InterPro" id="IPR001576">
    <property type="entry name" value="Phosphoglycerate_kinase"/>
</dbReference>
<dbReference type="InterPro" id="IPR015911">
    <property type="entry name" value="Phosphoglycerate_kinase_CS"/>
</dbReference>
<dbReference type="InterPro" id="IPR015824">
    <property type="entry name" value="Phosphoglycerate_kinase_N"/>
</dbReference>
<dbReference type="InterPro" id="IPR036043">
    <property type="entry name" value="Phosphoglycerate_kinase_sf"/>
</dbReference>
<dbReference type="PANTHER" id="PTHR11406">
    <property type="entry name" value="PHOSPHOGLYCERATE KINASE"/>
    <property type="match status" value="1"/>
</dbReference>
<dbReference type="PANTHER" id="PTHR11406:SF23">
    <property type="entry name" value="PHOSPHOGLYCERATE KINASE 1, CHLOROPLASTIC-RELATED"/>
    <property type="match status" value="1"/>
</dbReference>
<dbReference type="Pfam" id="PF00162">
    <property type="entry name" value="PGK"/>
    <property type="match status" value="1"/>
</dbReference>
<dbReference type="PIRSF" id="PIRSF000724">
    <property type="entry name" value="Pgk"/>
    <property type="match status" value="1"/>
</dbReference>
<dbReference type="PRINTS" id="PR00477">
    <property type="entry name" value="PHGLYCKINASE"/>
</dbReference>
<dbReference type="SUPFAM" id="SSF53748">
    <property type="entry name" value="Phosphoglycerate kinase"/>
    <property type="match status" value="1"/>
</dbReference>
<dbReference type="PROSITE" id="PS00111">
    <property type="entry name" value="PGLYCERATE_KINASE"/>
    <property type="match status" value="1"/>
</dbReference>
<sequence>MAKLTVKDLDLKGKKVLVRVDFNVPLKNGVITNDNRISAALPTIKYIIEHGGRAILFSHLGRVKEEADKEGKSLAPVAKNLAEKLGQEVIFPGSTRGAELEAAIDALEDGQVLLVENTRFEDIDGKKESKNDPELGKYWASLGEGIFVNDAFGTAHRAHASNVGISANVEKAVAGFLLENEIAYIKEAVETPERPFVAILGGSKVSDKIGVIENLLEKADKVLIGGGMTYTFYKAQGIEIGNSLCEEDKLDVAKSLLEKSNGKLVLPVDSKEANAFADYTEVKVTEGEAVDTGFLGLDIGPKSIAKFDEALTGAKTVVWNGPMGVFENPDFQEGTIGVMDAIVKQPGVKSIIGGGDSAAAAINLGRADKFSWISTGGGASMELLEGKELPGLAALTEK</sequence>
<accession>C0M940</accession>
<feature type="chain" id="PRO_1000192850" description="Phosphoglycerate kinase">
    <location>
        <begin position="1"/>
        <end position="398"/>
    </location>
</feature>
<feature type="binding site" evidence="1">
    <location>
        <begin position="21"/>
        <end position="23"/>
    </location>
    <ligand>
        <name>substrate</name>
    </ligand>
</feature>
<feature type="binding site" evidence="1">
    <location>
        <position position="36"/>
    </location>
    <ligand>
        <name>substrate</name>
    </ligand>
</feature>
<feature type="binding site" evidence="1">
    <location>
        <begin position="59"/>
        <end position="62"/>
    </location>
    <ligand>
        <name>substrate</name>
    </ligand>
</feature>
<feature type="binding site" evidence="1">
    <location>
        <position position="119"/>
    </location>
    <ligand>
        <name>substrate</name>
    </ligand>
</feature>
<feature type="binding site" evidence="1">
    <location>
        <position position="157"/>
    </location>
    <ligand>
        <name>substrate</name>
    </ligand>
</feature>
<feature type="binding site" evidence="1">
    <location>
        <position position="208"/>
    </location>
    <ligand>
        <name>ATP</name>
        <dbReference type="ChEBI" id="CHEBI:30616"/>
    </ligand>
</feature>
<feature type="binding site" evidence="1">
    <location>
        <position position="296"/>
    </location>
    <ligand>
        <name>ATP</name>
        <dbReference type="ChEBI" id="CHEBI:30616"/>
    </ligand>
</feature>
<feature type="binding site" evidence="1">
    <location>
        <position position="327"/>
    </location>
    <ligand>
        <name>ATP</name>
        <dbReference type="ChEBI" id="CHEBI:30616"/>
    </ligand>
</feature>
<feature type="binding site" evidence="1">
    <location>
        <begin position="354"/>
        <end position="357"/>
    </location>
    <ligand>
        <name>ATP</name>
        <dbReference type="ChEBI" id="CHEBI:30616"/>
    </ligand>
</feature>
<reference key="1">
    <citation type="journal article" date="2009" name="PLoS Pathog.">
        <title>Genomic evidence for the evolution of Streptococcus equi: host restriction, increased virulence, and genetic exchange with human pathogens.</title>
        <authorList>
            <person name="Holden M.T.G."/>
            <person name="Heather Z."/>
            <person name="Paillot R."/>
            <person name="Steward K.F."/>
            <person name="Webb K."/>
            <person name="Ainslie F."/>
            <person name="Jourdan T."/>
            <person name="Bason N.C."/>
            <person name="Holroyd N.E."/>
            <person name="Mungall K."/>
            <person name="Quail M.A."/>
            <person name="Sanders M."/>
            <person name="Simmonds M."/>
            <person name="Willey D."/>
            <person name="Brooks K."/>
            <person name="Aanensen D.M."/>
            <person name="Spratt B.G."/>
            <person name="Jolley K.A."/>
            <person name="Maiden M.C.J."/>
            <person name="Kehoe M."/>
            <person name="Chanter N."/>
            <person name="Bentley S.D."/>
            <person name="Robinson C."/>
            <person name="Maskell D.J."/>
            <person name="Parkhill J."/>
            <person name="Waller A.S."/>
        </authorList>
    </citation>
    <scope>NUCLEOTIDE SEQUENCE [LARGE SCALE GENOMIC DNA]</scope>
    <source>
        <strain>4047</strain>
    </source>
</reference>